<comment type="function">
    <text evidence="1">Participates actively in the response to hyperosmotic and heat shock by preventing the aggregation of stress-denatured proteins and by disaggregating proteins, also in an autonomous, DnaK-independent fashion. Unfolded proteins bind initially to DnaJ; upon interaction with the DnaJ-bound protein, DnaK hydrolyzes its bound ATP, resulting in the formation of a stable complex. GrpE releases ADP from DnaK; ATP binding to DnaK triggers the release of the substrate protein, thus completing the reaction cycle. Several rounds of ATP-dependent interactions between DnaJ, DnaK and GrpE are required for fully efficient folding. Also involved, together with DnaK and GrpE, in the DNA replication of plasmids through activation of initiation proteins.</text>
</comment>
<comment type="cofactor">
    <cofactor evidence="1">
        <name>Zn(2+)</name>
        <dbReference type="ChEBI" id="CHEBI:29105"/>
    </cofactor>
    <text evidence="1">Binds 2 Zn(2+) ions per monomer.</text>
</comment>
<comment type="subunit">
    <text evidence="1">Homodimer.</text>
</comment>
<comment type="subcellular location">
    <subcellularLocation>
        <location evidence="1">Cytoplasm</location>
    </subcellularLocation>
</comment>
<comment type="domain">
    <text evidence="1">The J domain is necessary and sufficient to stimulate DnaK ATPase activity. Zinc center 1 plays an important role in the autonomous, DnaK-independent chaperone activity of DnaJ. Zinc center 2 is essential for interaction with DnaK and for DnaJ activity.</text>
</comment>
<comment type="similarity">
    <text evidence="1">Belongs to the DnaJ family.</text>
</comment>
<organism>
    <name type="scientific">Buchnera aphidicola subsp. Baizongia pistaciae (strain Bp)</name>
    <dbReference type="NCBI Taxonomy" id="224915"/>
    <lineage>
        <taxon>Bacteria</taxon>
        <taxon>Pseudomonadati</taxon>
        <taxon>Pseudomonadota</taxon>
        <taxon>Gammaproteobacteria</taxon>
        <taxon>Enterobacterales</taxon>
        <taxon>Erwiniaceae</taxon>
        <taxon>Buchnera</taxon>
    </lineage>
</organism>
<gene>
    <name evidence="1" type="primary">dnaJ</name>
    <name type="ordered locus">bbp_141</name>
</gene>
<dbReference type="EMBL" id="AE016826">
    <property type="protein sequence ID" value="AAO26875.1"/>
    <property type="molecule type" value="Genomic_DNA"/>
</dbReference>
<dbReference type="RefSeq" id="WP_011091276.1">
    <property type="nucleotide sequence ID" value="NC_004545.1"/>
</dbReference>
<dbReference type="SMR" id="Q89AU7"/>
<dbReference type="STRING" id="224915.bbp_141"/>
<dbReference type="KEGG" id="bab:bbp_141"/>
<dbReference type="eggNOG" id="COG0484">
    <property type="taxonomic scope" value="Bacteria"/>
</dbReference>
<dbReference type="HOGENOM" id="CLU_017633_0_7_6"/>
<dbReference type="OrthoDB" id="9779889at2"/>
<dbReference type="Proteomes" id="UP000000601">
    <property type="component" value="Chromosome"/>
</dbReference>
<dbReference type="GO" id="GO:0005737">
    <property type="term" value="C:cytoplasm"/>
    <property type="evidence" value="ECO:0007669"/>
    <property type="project" value="UniProtKB-SubCell"/>
</dbReference>
<dbReference type="GO" id="GO:0005524">
    <property type="term" value="F:ATP binding"/>
    <property type="evidence" value="ECO:0007669"/>
    <property type="project" value="InterPro"/>
</dbReference>
<dbReference type="GO" id="GO:0031072">
    <property type="term" value="F:heat shock protein binding"/>
    <property type="evidence" value="ECO:0007669"/>
    <property type="project" value="InterPro"/>
</dbReference>
<dbReference type="GO" id="GO:0051082">
    <property type="term" value="F:unfolded protein binding"/>
    <property type="evidence" value="ECO:0007669"/>
    <property type="project" value="UniProtKB-UniRule"/>
</dbReference>
<dbReference type="GO" id="GO:0008270">
    <property type="term" value="F:zinc ion binding"/>
    <property type="evidence" value="ECO:0007669"/>
    <property type="project" value="UniProtKB-UniRule"/>
</dbReference>
<dbReference type="GO" id="GO:0051085">
    <property type="term" value="P:chaperone cofactor-dependent protein refolding"/>
    <property type="evidence" value="ECO:0007669"/>
    <property type="project" value="TreeGrafter"/>
</dbReference>
<dbReference type="GO" id="GO:0006260">
    <property type="term" value="P:DNA replication"/>
    <property type="evidence" value="ECO:0007669"/>
    <property type="project" value="UniProtKB-KW"/>
</dbReference>
<dbReference type="GO" id="GO:0042026">
    <property type="term" value="P:protein refolding"/>
    <property type="evidence" value="ECO:0007669"/>
    <property type="project" value="TreeGrafter"/>
</dbReference>
<dbReference type="GO" id="GO:0009408">
    <property type="term" value="P:response to heat"/>
    <property type="evidence" value="ECO:0007669"/>
    <property type="project" value="InterPro"/>
</dbReference>
<dbReference type="CDD" id="cd06257">
    <property type="entry name" value="DnaJ"/>
    <property type="match status" value="1"/>
</dbReference>
<dbReference type="CDD" id="cd10747">
    <property type="entry name" value="DnaJ_C"/>
    <property type="match status" value="1"/>
</dbReference>
<dbReference type="CDD" id="cd10719">
    <property type="entry name" value="DnaJ_zf"/>
    <property type="match status" value="1"/>
</dbReference>
<dbReference type="FunFam" id="1.10.287.110:FF:000034">
    <property type="entry name" value="Chaperone protein DnaJ"/>
    <property type="match status" value="1"/>
</dbReference>
<dbReference type="FunFam" id="2.10.230.10:FF:000002">
    <property type="entry name" value="Molecular chaperone DnaJ"/>
    <property type="match status" value="1"/>
</dbReference>
<dbReference type="FunFam" id="2.60.260.20:FF:000004">
    <property type="entry name" value="Molecular chaperone DnaJ"/>
    <property type="match status" value="1"/>
</dbReference>
<dbReference type="Gene3D" id="1.10.287.110">
    <property type="entry name" value="DnaJ domain"/>
    <property type="match status" value="1"/>
</dbReference>
<dbReference type="Gene3D" id="2.10.230.10">
    <property type="entry name" value="Heat shock protein DnaJ, cysteine-rich domain"/>
    <property type="match status" value="1"/>
</dbReference>
<dbReference type="Gene3D" id="2.60.260.20">
    <property type="entry name" value="Urease metallochaperone UreE, N-terminal domain"/>
    <property type="match status" value="2"/>
</dbReference>
<dbReference type="HAMAP" id="MF_01152">
    <property type="entry name" value="DnaJ"/>
    <property type="match status" value="1"/>
</dbReference>
<dbReference type="InterPro" id="IPR012724">
    <property type="entry name" value="DnaJ"/>
</dbReference>
<dbReference type="InterPro" id="IPR002939">
    <property type="entry name" value="DnaJ_C"/>
</dbReference>
<dbReference type="InterPro" id="IPR001623">
    <property type="entry name" value="DnaJ_domain"/>
</dbReference>
<dbReference type="InterPro" id="IPR018253">
    <property type="entry name" value="DnaJ_domain_CS"/>
</dbReference>
<dbReference type="InterPro" id="IPR008971">
    <property type="entry name" value="HSP40/DnaJ_pept-bd"/>
</dbReference>
<dbReference type="InterPro" id="IPR001305">
    <property type="entry name" value="HSP_DnaJ_Cys-rich_dom"/>
</dbReference>
<dbReference type="InterPro" id="IPR036410">
    <property type="entry name" value="HSP_DnaJ_Cys-rich_dom_sf"/>
</dbReference>
<dbReference type="InterPro" id="IPR036869">
    <property type="entry name" value="J_dom_sf"/>
</dbReference>
<dbReference type="NCBIfam" id="TIGR02349">
    <property type="entry name" value="DnaJ_bact"/>
    <property type="match status" value="1"/>
</dbReference>
<dbReference type="NCBIfam" id="NF008035">
    <property type="entry name" value="PRK10767.1"/>
    <property type="match status" value="1"/>
</dbReference>
<dbReference type="PANTHER" id="PTHR43096:SF48">
    <property type="entry name" value="CHAPERONE PROTEIN DNAJ"/>
    <property type="match status" value="1"/>
</dbReference>
<dbReference type="PANTHER" id="PTHR43096">
    <property type="entry name" value="DNAJ HOMOLOG 1, MITOCHONDRIAL-RELATED"/>
    <property type="match status" value="1"/>
</dbReference>
<dbReference type="Pfam" id="PF00226">
    <property type="entry name" value="DnaJ"/>
    <property type="match status" value="1"/>
</dbReference>
<dbReference type="Pfam" id="PF01556">
    <property type="entry name" value="DnaJ_C"/>
    <property type="match status" value="1"/>
</dbReference>
<dbReference type="Pfam" id="PF00684">
    <property type="entry name" value="DnaJ_CXXCXGXG"/>
    <property type="match status" value="1"/>
</dbReference>
<dbReference type="PRINTS" id="PR00625">
    <property type="entry name" value="JDOMAIN"/>
</dbReference>
<dbReference type="SMART" id="SM00271">
    <property type="entry name" value="DnaJ"/>
    <property type="match status" value="1"/>
</dbReference>
<dbReference type="SUPFAM" id="SSF46565">
    <property type="entry name" value="Chaperone J-domain"/>
    <property type="match status" value="1"/>
</dbReference>
<dbReference type="SUPFAM" id="SSF57938">
    <property type="entry name" value="DnaJ/Hsp40 cysteine-rich domain"/>
    <property type="match status" value="1"/>
</dbReference>
<dbReference type="SUPFAM" id="SSF49493">
    <property type="entry name" value="HSP40/DnaJ peptide-binding domain"/>
    <property type="match status" value="2"/>
</dbReference>
<dbReference type="PROSITE" id="PS00636">
    <property type="entry name" value="DNAJ_1"/>
    <property type="match status" value="1"/>
</dbReference>
<dbReference type="PROSITE" id="PS50076">
    <property type="entry name" value="DNAJ_2"/>
    <property type="match status" value="1"/>
</dbReference>
<dbReference type="PROSITE" id="PS51188">
    <property type="entry name" value="ZF_CR"/>
    <property type="match status" value="1"/>
</dbReference>
<name>DNAJ_BUCBP</name>
<feature type="chain" id="PRO_0000070747" description="Chaperone protein DnaJ">
    <location>
        <begin position="1"/>
        <end position="383"/>
    </location>
</feature>
<feature type="domain" description="J" evidence="1">
    <location>
        <begin position="5"/>
        <end position="70"/>
    </location>
</feature>
<feature type="repeat" description="CXXCXGXG motif">
    <location>
        <begin position="150"/>
        <end position="157"/>
    </location>
</feature>
<feature type="repeat" description="CXXCXGXG motif">
    <location>
        <begin position="167"/>
        <end position="174"/>
    </location>
</feature>
<feature type="repeat" description="CXXCXGXG motif">
    <location>
        <begin position="189"/>
        <end position="196"/>
    </location>
</feature>
<feature type="repeat" description="CXXCXGXG motif">
    <location>
        <begin position="203"/>
        <end position="210"/>
    </location>
</feature>
<feature type="zinc finger region" description="CR-type" evidence="1">
    <location>
        <begin position="137"/>
        <end position="215"/>
    </location>
</feature>
<feature type="binding site" evidence="1">
    <location>
        <position position="150"/>
    </location>
    <ligand>
        <name>Zn(2+)</name>
        <dbReference type="ChEBI" id="CHEBI:29105"/>
        <label>1</label>
    </ligand>
</feature>
<feature type="binding site" evidence="1">
    <location>
        <position position="153"/>
    </location>
    <ligand>
        <name>Zn(2+)</name>
        <dbReference type="ChEBI" id="CHEBI:29105"/>
        <label>1</label>
    </ligand>
</feature>
<feature type="binding site" evidence="1">
    <location>
        <position position="167"/>
    </location>
    <ligand>
        <name>Zn(2+)</name>
        <dbReference type="ChEBI" id="CHEBI:29105"/>
        <label>2</label>
    </ligand>
</feature>
<feature type="binding site" evidence="1">
    <location>
        <position position="170"/>
    </location>
    <ligand>
        <name>Zn(2+)</name>
        <dbReference type="ChEBI" id="CHEBI:29105"/>
        <label>2</label>
    </ligand>
</feature>
<feature type="binding site" evidence="1">
    <location>
        <position position="189"/>
    </location>
    <ligand>
        <name>Zn(2+)</name>
        <dbReference type="ChEBI" id="CHEBI:29105"/>
        <label>2</label>
    </ligand>
</feature>
<feature type="binding site" evidence="1">
    <location>
        <position position="192"/>
    </location>
    <ligand>
        <name>Zn(2+)</name>
        <dbReference type="ChEBI" id="CHEBI:29105"/>
        <label>2</label>
    </ligand>
</feature>
<feature type="binding site" evidence="1">
    <location>
        <position position="203"/>
    </location>
    <ligand>
        <name>Zn(2+)</name>
        <dbReference type="ChEBI" id="CHEBI:29105"/>
        <label>1</label>
    </ligand>
</feature>
<feature type="binding site" evidence="1">
    <location>
        <position position="206"/>
    </location>
    <ligand>
        <name>Zn(2+)</name>
        <dbReference type="ChEBI" id="CHEBI:29105"/>
        <label>1</label>
    </ligand>
</feature>
<proteinExistence type="inferred from homology"/>
<keyword id="KW-0143">Chaperone</keyword>
<keyword id="KW-0963">Cytoplasm</keyword>
<keyword id="KW-0235">DNA replication</keyword>
<keyword id="KW-0479">Metal-binding</keyword>
<keyword id="KW-1185">Reference proteome</keyword>
<keyword id="KW-0677">Repeat</keyword>
<keyword id="KW-0346">Stress response</keyword>
<keyword id="KW-0862">Zinc</keyword>
<keyword id="KW-0863">Zinc-finger</keyword>
<accession>Q89AU7</accession>
<evidence type="ECO:0000255" key="1">
    <source>
        <dbReference type="HAMAP-Rule" id="MF_01152"/>
    </source>
</evidence>
<protein>
    <recommendedName>
        <fullName evidence="1">Chaperone protein DnaJ</fullName>
    </recommendedName>
</protein>
<reference key="1">
    <citation type="journal article" date="2003" name="Proc. Natl. Acad. Sci. U.S.A.">
        <title>Reductive genome evolution in Buchnera aphidicola.</title>
        <authorList>
            <person name="van Ham R.C.H.J."/>
            <person name="Kamerbeek J."/>
            <person name="Palacios C."/>
            <person name="Rausell C."/>
            <person name="Abascal F."/>
            <person name="Bastolla U."/>
            <person name="Fernandez J.M."/>
            <person name="Jimenez L."/>
            <person name="Postigo M."/>
            <person name="Silva F.J."/>
            <person name="Tamames J."/>
            <person name="Viguera E."/>
            <person name="Latorre A."/>
            <person name="Valencia A."/>
            <person name="Moran F."/>
            <person name="Moya A."/>
        </authorList>
    </citation>
    <scope>NUCLEOTIDE SEQUENCE [LARGE SCALE GENOMIC DNA]</scope>
    <source>
        <strain>Bp</strain>
    </source>
</reference>
<sequence length="383" mass="43299">MSKQDYYKTLGVTQSSDEREIKRAYKKLAMKYHPDRNPGNKNSEEKFKTIKEAYEILIDPKKRTAYDQYGHSAFEQGNSTGNNNTFTHSFSSNSDFSDIFGDVFGDIFGGTRKQKSERQGSDLRYDMTLTLEEAVRGTIKEIKIPTLQKCPTCYGYGTKTGTKPQFCPTCRGNGQIQMRKGFFTVQQTCPQCHGEGNFIRDPCRRCHGNGRIEISKTLSVKVPPGVDTNDKIRLNNEGEAGENGAMAGNLYVQINVKKHPIFEREENNLYCEVPISFSMAALGGEIEVPTLDGKVKLKIPCETQSGKLLRIRGRGVKSIRNNNRQGDLLCRIIVETPVNLNDLQKDLLYKLGESFNGFKGEKNSPKSKRFFEGVKRFFDDLTR</sequence>